<gene>
    <name evidence="3" type="primary">CFAP45</name>
    <name evidence="4" type="synonym">FAP45</name>
    <name evidence="4" type="ORF">CHLREDRAFT_206096</name>
</gene>
<keyword id="KW-0002">3D-structure</keyword>
<keyword id="KW-0966">Cell projection</keyword>
<keyword id="KW-0969">Cilium</keyword>
<keyword id="KW-0175">Coiled coil</keyword>
<keyword id="KW-0282">Flagellum</keyword>
<feature type="chain" id="PRO_0000431301" description="Cilia- and flagella-associated protein 45">
    <location>
        <begin position="1"/>
        <end position="501"/>
    </location>
</feature>
<feature type="coiled-coil region" evidence="1">
    <location>
        <begin position="75"/>
        <end position="114"/>
    </location>
</feature>
<accession>A8I9E8</accession>
<name>CFA45_CHLRE</name>
<protein>
    <recommendedName>
        <fullName evidence="3">Cilia- and flagella-associated protein 45</fullName>
    </recommendedName>
    <alternativeName>
        <fullName evidence="3">Flagellum-associated protein 45</fullName>
    </alternativeName>
</protein>
<proteinExistence type="evidence at protein level"/>
<sequence length="501" mass="58929">MPQTPPRSGGYRSGKQSYVDESLFGGSKRTGAAQVETLDSLKLTAPTRTISPKDRDVVTLTKGDLTRMLKASPIMTAEDVAAAKREAEAKREQLQAVSKARKEKMLKLEEEAKKQAPPTETEILQRQLNDATRSRATHMMLEQKDPVKHMNQMMLYSKCVTIRDAQIEEKKQMLAEEEEEQRRLDLMMEIERVKALEQYEARERQRVEERRKGAAVLSEQIKERERERIRQEELRDQERLQMLREIERLKEEEMQAQIEKKIQAKQLMEEVAAANSEQIKRKEGMKVREKEEDLRIADYILQKEMREQSLAAEKERIAKEKEMETARLRAMQERAADKQSELDELRARRYQEAKEREWRQKERAYAERQASMQQELANARTAQQASKLKQKAEMARLEHDEFMRVLDVNRAKEYDELQQTVNAMTLNSKYKEELLAQIQANEERRKRERSHYLEEGARLREAAEKERQLLLQIKDRKLGELESAGVPGKYRAELEKMKIRS</sequence>
<reference key="1">
    <citation type="journal article" date="2007" name="Science">
        <title>The Chlamydomonas genome reveals the evolution of key animal and plant functions.</title>
        <authorList>
            <person name="Merchant S.S."/>
            <person name="Prochnik S.E."/>
            <person name="Vallon O."/>
            <person name="Harris E.H."/>
            <person name="Karpowicz S.J."/>
            <person name="Witman G.B."/>
            <person name="Terry A."/>
            <person name="Salamov A."/>
            <person name="Fritz-Laylin L.K."/>
            <person name="Marechal-Drouard L."/>
            <person name="Marshall W.F."/>
            <person name="Qu L.H."/>
            <person name="Nelson D.R."/>
            <person name="Sanderfoot A.A."/>
            <person name="Spalding M.H."/>
            <person name="Kapitonov V.V."/>
            <person name="Ren Q."/>
            <person name="Ferris P."/>
            <person name="Lindquist E."/>
            <person name="Shapiro H."/>
            <person name="Lucas S.M."/>
            <person name="Grimwood J."/>
            <person name="Schmutz J."/>
            <person name="Cardol P."/>
            <person name="Cerutti H."/>
            <person name="Chanfreau G."/>
            <person name="Chen C.L."/>
            <person name="Cognat V."/>
            <person name="Croft M.T."/>
            <person name="Dent R."/>
            <person name="Dutcher S."/>
            <person name="Fernandez E."/>
            <person name="Fukuzawa H."/>
            <person name="Gonzalez-Ballester D."/>
            <person name="Gonzalez-Halphen D."/>
            <person name="Hallmann A."/>
            <person name="Hanikenne M."/>
            <person name="Hippler M."/>
            <person name="Inwood W."/>
            <person name="Jabbari K."/>
            <person name="Kalanon M."/>
            <person name="Kuras R."/>
            <person name="Lefebvre P.A."/>
            <person name="Lemaire S.D."/>
            <person name="Lobanov A.V."/>
            <person name="Lohr M."/>
            <person name="Manuell A."/>
            <person name="Meier I."/>
            <person name="Mets L."/>
            <person name="Mittag M."/>
            <person name="Mittelmeier T."/>
            <person name="Moroney J.V."/>
            <person name="Moseley J."/>
            <person name="Napoli C."/>
            <person name="Nedelcu A.M."/>
            <person name="Niyogi K."/>
            <person name="Novoselov S.V."/>
            <person name="Paulsen I.T."/>
            <person name="Pazour G.J."/>
            <person name="Purton S."/>
            <person name="Ral J.P."/>
            <person name="Riano-Pachon D.M."/>
            <person name="Riekhof W."/>
            <person name="Rymarquis L."/>
            <person name="Schroda M."/>
            <person name="Stern D."/>
            <person name="Umen J."/>
            <person name="Willows R."/>
            <person name="Wilson N."/>
            <person name="Zimmer S.L."/>
            <person name="Allmer J."/>
            <person name="Balk J."/>
            <person name="Bisova K."/>
            <person name="Chen C.J."/>
            <person name="Elias M."/>
            <person name="Gendler K."/>
            <person name="Hauser C."/>
            <person name="Lamb M.R."/>
            <person name="Ledford H."/>
            <person name="Long J.C."/>
            <person name="Minagawa J."/>
            <person name="Page M.D."/>
            <person name="Pan J."/>
            <person name="Pootakham W."/>
            <person name="Roje S."/>
            <person name="Rose A."/>
            <person name="Stahlberg E."/>
            <person name="Terauchi A.M."/>
            <person name="Yang P."/>
            <person name="Ball S."/>
            <person name="Bowler C."/>
            <person name="Dieckmann C.L."/>
            <person name="Gladyshev V.N."/>
            <person name="Green P."/>
            <person name="Jorgensen R."/>
            <person name="Mayfield S."/>
            <person name="Mueller-Roeber B."/>
            <person name="Rajamani S."/>
            <person name="Sayre R.T."/>
            <person name="Brokstein P."/>
            <person name="Dubchak I."/>
            <person name="Goodstein D."/>
            <person name="Hornick L."/>
            <person name="Huang Y.W."/>
            <person name="Jhaveri J."/>
            <person name="Luo Y."/>
            <person name="Martinez D."/>
            <person name="Ngau W.C."/>
            <person name="Otillar B."/>
            <person name="Poliakov A."/>
            <person name="Porter A."/>
            <person name="Szajkowski L."/>
            <person name="Werner G."/>
            <person name="Zhou K."/>
            <person name="Grigoriev I.V."/>
            <person name="Rokhsar D.S."/>
            <person name="Grossman A.R."/>
        </authorList>
    </citation>
    <scope>NUCLEOTIDE SEQUENCE [LARGE SCALE GENOMIC DNA]</scope>
    <source>
        <strain>CC-503</strain>
    </source>
</reference>
<reference key="2">
    <citation type="journal article" date="2005" name="J. Cell Biol.">
        <title>Proteomic analysis of a eukaryotic cilium.</title>
        <authorList>
            <person name="Pazour G.J."/>
            <person name="Agrin N."/>
            <person name="Leszyk J."/>
            <person name="Witman G.B."/>
        </authorList>
    </citation>
    <scope>IDENTIFICATION BY MASS SPECTROMETRY</scope>
    <scope>SUBCELLULAR LOCATION</scope>
</reference>
<comment type="subcellular location">
    <subcellularLocation>
        <location evidence="2">Cell projection</location>
        <location evidence="2">Cilium</location>
        <location evidence="2">Flagellum</location>
    </subcellularLocation>
</comment>
<comment type="similarity">
    <text evidence="3">Belongs to the CFAP45 family.</text>
</comment>
<dbReference type="EMBL" id="DS496114">
    <property type="protein sequence ID" value="EDP06767.1"/>
    <property type="molecule type" value="Genomic_DNA"/>
</dbReference>
<dbReference type="RefSeq" id="XP_001701792.1">
    <property type="nucleotide sequence ID" value="XM_001701740.1"/>
</dbReference>
<dbReference type="PDB" id="6U42">
    <property type="method" value="EM"/>
    <property type="resolution" value="3.40 A"/>
    <property type="chains" value="5A/5B/5C/5D=1-501"/>
</dbReference>
<dbReference type="PDB" id="8GLV">
    <property type="method" value="EM"/>
    <property type="resolution" value="3.10 A"/>
    <property type="chains" value="4X/5C/Go/Gp/Gq/OD/OO=1-501"/>
</dbReference>
<dbReference type="PDBsum" id="6U42"/>
<dbReference type="PDBsum" id="8GLV"/>
<dbReference type="EMDB" id="EMD-20631"/>
<dbReference type="EMDB" id="EMD-40220"/>
<dbReference type="SMR" id="A8I9E8"/>
<dbReference type="PaxDb" id="3055-EDP06767"/>
<dbReference type="EnsemblPlants" id="PNW86585">
    <property type="protein sequence ID" value="PNW86585"/>
    <property type="gene ID" value="CHLRE_02g092700v5"/>
</dbReference>
<dbReference type="GeneID" id="5727505"/>
<dbReference type="Gramene" id="PNW86585">
    <property type="protein sequence ID" value="PNW86585"/>
    <property type="gene ID" value="CHLRE_02g092700v5"/>
</dbReference>
<dbReference type="KEGG" id="cre:CHLRE_02g092700v5"/>
<dbReference type="eggNOG" id="ENOG502QPRZ">
    <property type="taxonomic scope" value="Eukaryota"/>
</dbReference>
<dbReference type="HOGENOM" id="CLU_026959_0_0_1"/>
<dbReference type="OMA" id="WGHKPET"/>
<dbReference type="OrthoDB" id="1902038at2759"/>
<dbReference type="GO" id="GO:0031514">
    <property type="term" value="C:motile cilium"/>
    <property type="evidence" value="ECO:0007669"/>
    <property type="project" value="UniProtKB-SubCell"/>
</dbReference>
<dbReference type="InterPro" id="IPR033253">
    <property type="entry name" value="CFAP45"/>
</dbReference>
<dbReference type="InterPro" id="IPR043597">
    <property type="entry name" value="TPH_dom"/>
</dbReference>
<dbReference type="PANTHER" id="PTHR15504:SF0">
    <property type="entry name" value="CILIA- AND FLAGELLA-ASSOCIATED PROTEIN 45"/>
    <property type="match status" value="1"/>
</dbReference>
<dbReference type="PANTHER" id="PTHR15504">
    <property type="entry name" value="NASOPHARYNGEAL EPITHELIUM SPECIFIC PROTEIN 1"/>
    <property type="match status" value="1"/>
</dbReference>
<dbReference type="Pfam" id="PF13868">
    <property type="entry name" value="TPH"/>
    <property type="match status" value="1"/>
</dbReference>
<organism>
    <name type="scientific">Chlamydomonas reinhardtii</name>
    <name type="common">Chlamydomonas smithii</name>
    <dbReference type="NCBI Taxonomy" id="3055"/>
    <lineage>
        <taxon>Eukaryota</taxon>
        <taxon>Viridiplantae</taxon>
        <taxon>Chlorophyta</taxon>
        <taxon>core chlorophytes</taxon>
        <taxon>Chlorophyceae</taxon>
        <taxon>CS clade</taxon>
        <taxon>Chlamydomonadales</taxon>
        <taxon>Chlamydomonadaceae</taxon>
        <taxon>Chlamydomonas</taxon>
    </lineage>
</organism>
<evidence type="ECO:0000255" key="1"/>
<evidence type="ECO:0000269" key="2">
    <source>
    </source>
</evidence>
<evidence type="ECO:0000305" key="3"/>
<evidence type="ECO:0000312" key="4">
    <source>
        <dbReference type="EMBL" id="EDP06767.1"/>
    </source>
</evidence>